<comment type="function">
    <text evidence="2">Lipid transfer protein required for autophagosome completion and peroxisome degradation. Tethers the edge of the isolation membrane (IM) to the endoplasmic reticulum (ER) and mediates direct lipid transfer from ER to IM for IM expansion. Atg2 binds to the ER exit site (ERES), which is the membrane source for autophagosome formation, using basic residues in its N-terminal region (NR) and to the expanding edge of the IM through its C-terminal region. The latter binding is assisted by an atg18-PtdIns3P interaction. Atg2 then extracts phospholipids from the membrane source using its NR and transfers them to atg9 to the IM through its predicted beta-sheet-rich structure for membrane expansion.</text>
</comment>
<comment type="catalytic activity">
    <reaction evidence="1">
        <text>a 1,2-diacyl-sn-glycero-3-phosphocholine(in) = a 1,2-diacyl-sn-glycero-3-phosphocholine(out)</text>
        <dbReference type="Rhea" id="RHEA:38571"/>
        <dbReference type="ChEBI" id="CHEBI:57643"/>
    </reaction>
</comment>
<comment type="catalytic activity">
    <reaction evidence="1">
        <text>a 1,2-diacyl-sn-glycero-3-phospho-L-serine(in) = a 1,2-diacyl-sn-glycero-3-phospho-L-serine(out)</text>
        <dbReference type="Rhea" id="RHEA:38663"/>
        <dbReference type="ChEBI" id="CHEBI:57262"/>
    </reaction>
</comment>
<comment type="catalytic activity">
    <reaction evidence="1">
        <text>a 1,2-diacyl-sn-glycero-3-phosphoethanolamine(in) = a 1,2-diacyl-sn-glycero-3-phosphoethanolamine(out)</text>
        <dbReference type="Rhea" id="RHEA:38895"/>
        <dbReference type="ChEBI" id="CHEBI:64612"/>
    </reaction>
</comment>
<comment type="subcellular location">
    <subcellularLocation>
        <location evidence="2">Preautophagosomal structure membrane</location>
        <topology evidence="2">Peripheral membrane protein</topology>
    </subcellularLocation>
    <subcellularLocation>
        <location evidence="2">Endoplasmic reticulum membrane</location>
        <topology evidence="2">Peripheral membrane protein</topology>
    </subcellularLocation>
</comment>
<comment type="similarity">
    <text evidence="4">Belongs to the ATG2 family.</text>
</comment>
<feature type="chain" id="PRO_0000317804" description="Autophagy-related protein 2">
    <location>
        <begin position="1"/>
        <end position="2084"/>
    </location>
</feature>
<feature type="region of interest" description="Disordered" evidence="3">
    <location>
        <begin position="57"/>
        <end position="87"/>
    </location>
</feature>
<feature type="region of interest" description="Disordered" evidence="3">
    <location>
        <begin position="100"/>
        <end position="131"/>
    </location>
</feature>
<feature type="region of interest" description="Disordered" evidence="3">
    <location>
        <begin position="242"/>
        <end position="334"/>
    </location>
</feature>
<feature type="region of interest" description="Disordered" evidence="3">
    <location>
        <begin position="372"/>
        <end position="404"/>
    </location>
</feature>
<feature type="region of interest" description="Disordered" evidence="3">
    <location>
        <begin position="425"/>
        <end position="482"/>
    </location>
</feature>
<feature type="region of interest" description="Disordered" evidence="3">
    <location>
        <begin position="613"/>
        <end position="633"/>
    </location>
</feature>
<feature type="region of interest" description="Disordered" evidence="3">
    <location>
        <begin position="653"/>
        <end position="693"/>
    </location>
</feature>
<feature type="region of interest" description="Disordered" evidence="3">
    <location>
        <begin position="728"/>
        <end position="749"/>
    </location>
</feature>
<feature type="region of interest" description="Disordered" evidence="3">
    <location>
        <begin position="907"/>
        <end position="940"/>
    </location>
</feature>
<feature type="region of interest" description="Disordered" evidence="3">
    <location>
        <begin position="2065"/>
        <end position="2084"/>
    </location>
</feature>
<feature type="compositionally biased region" description="Basic and acidic residues" evidence="3">
    <location>
        <begin position="57"/>
        <end position="71"/>
    </location>
</feature>
<feature type="compositionally biased region" description="Polar residues" evidence="3">
    <location>
        <begin position="108"/>
        <end position="118"/>
    </location>
</feature>
<feature type="compositionally biased region" description="Low complexity" evidence="3">
    <location>
        <begin position="251"/>
        <end position="279"/>
    </location>
</feature>
<feature type="compositionally biased region" description="Basic and acidic residues" evidence="3">
    <location>
        <begin position="291"/>
        <end position="302"/>
    </location>
</feature>
<feature type="compositionally biased region" description="Basic and acidic residues" evidence="3">
    <location>
        <begin position="313"/>
        <end position="334"/>
    </location>
</feature>
<feature type="compositionally biased region" description="Basic and acidic residues" evidence="3">
    <location>
        <begin position="372"/>
        <end position="382"/>
    </location>
</feature>
<feature type="compositionally biased region" description="Polar residues" evidence="3">
    <location>
        <begin position="383"/>
        <end position="399"/>
    </location>
</feature>
<feature type="compositionally biased region" description="Low complexity" evidence="3">
    <location>
        <begin position="458"/>
        <end position="471"/>
    </location>
</feature>
<feature type="compositionally biased region" description="Polar residues" evidence="3">
    <location>
        <begin position="618"/>
        <end position="628"/>
    </location>
</feature>
<feature type="compositionally biased region" description="Basic and acidic residues" evidence="3">
    <location>
        <begin position="671"/>
        <end position="693"/>
    </location>
</feature>
<feature type="compositionally biased region" description="Basic and acidic residues" evidence="3">
    <location>
        <begin position="730"/>
        <end position="744"/>
    </location>
</feature>
<feature type="compositionally biased region" description="Basic and acidic residues" evidence="3">
    <location>
        <begin position="2072"/>
        <end position="2084"/>
    </location>
</feature>
<keyword id="KW-0072">Autophagy</keyword>
<keyword id="KW-0256">Endoplasmic reticulum</keyword>
<keyword id="KW-0445">Lipid transport</keyword>
<keyword id="KW-0472">Membrane</keyword>
<keyword id="KW-0653">Protein transport</keyword>
<keyword id="KW-1185">Reference proteome</keyword>
<keyword id="KW-0813">Transport</keyword>
<organism>
    <name type="scientific">Aspergillus oryzae (strain ATCC 42149 / RIB 40)</name>
    <name type="common">Yellow koji mold</name>
    <dbReference type="NCBI Taxonomy" id="510516"/>
    <lineage>
        <taxon>Eukaryota</taxon>
        <taxon>Fungi</taxon>
        <taxon>Dikarya</taxon>
        <taxon>Ascomycota</taxon>
        <taxon>Pezizomycotina</taxon>
        <taxon>Eurotiomycetes</taxon>
        <taxon>Eurotiomycetidae</taxon>
        <taxon>Eurotiales</taxon>
        <taxon>Aspergillaceae</taxon>
        <taxon>Aspergillus</taxon>
        <taxon>Aspergillus subgen. Circumdati</taxon>
    </lineage>
</organism>
<protein>
    <recommendedName>
        <fullName>Autophagy-related protein 2</fullName>
    </recommendedName>
</protein>
<accession>Q2ULE1</accession>
<evidence type="ECO:0000250" key="1">
    <source>
        <dbReference type="UniProtKB" id="O94649"/>
    </source>
</evidence>
<evidence type="ECO:0000250" key="2">
    <source>
        <dbReference type="UniProtKB" id="P53855"/>
    </source>
</evidence>
<evidence type="ECO:0000256" key="3">
    <source>
        <dbReference type="SAM" id="MobiDB-lite"/>
    </source>
</evidence>
<evidence type="ECO:0000305" key="4"/>
<name>ATG2_ASPOR</name>
<proteinExistence type="inferred from homology"/>
<gene>
    <name type="primary">atg2</name>
    <name type="ORF">AO090003000445</name>
</gene>
<dbReference type="EMBL" id="BA000050">
    <property type="protein sequence ID" value="BAE57624.1"/>
    <property type="molecule type" value="Genomic_DNA"/>
</dbReference>
<dbReference type="STRING" id="510516.Q2ULE1"/>
<dbReference type="EnsemblFungi" id="BAE57624">
    <property type="protein sequence ID" value="BAE57624"/>
    <property type="gene ID" value="AO090003000445"/>
</dbReference>
<dbReference type="HOGENOM" id="CLU_000626_1_0_1"/>
<dbReference type="OMA" id="AVWKRAP"/>
<dbReference type="Proteomes" id="UP000006564">
    <property type="component" value="Chromosome 2"/>
</dbReference>
<dbReference type="GO" id="GO:0005789">
    <property type="term" value="C:endoplasmic reticulum membrane"/>
    <property type="evidence" value="ECO:0007669"/>
    <property type="project" value="UniProtKB-SubCell"/>
</dbReference>
<dbReference type="GO" id="GO:0061908">
    <property type="term" value="C:phagophore"/>
    <property type="evidence" value="ECO:0007669"/>
    <property type="project" value="TreeGrafter"/>
</dbReference>
<dbReference type="GO" id="GO:0034045">
    <property type="term" value="C:phagophore assembly site membrane"/>
    <property type="evidence" value="ECO:0007669"/>
    <property type="project" value="UniProtKB-SubCell"/>
</dbReference>
<dbReference type="GO" id="GO:0032266">
    <property type="term" value="F:phosphatidylinositol-3-phosphate binding"/>
    <property type="evidence" value="ECO:0007669"/>
    <property type="project" value="TreeGrafter"/>
</dbReference>
<dbReference type="GO" id="GO:0043495">
    <property type="term" value="F:protein-membrane adaptor activity"/>
    <property type="evidence" value="ECO:0007669"/>
    <property type="project" value="TreeGrafter"/>
</dbReference>
<dbReference type="GO" id="GO:0000045">
    <property type="term" value="P:autophagosome assembly"/>
    <property type="evidence" value="ECO:0007669"/>
    <property type="project" value="TreeGrafter"/>
</dbReference>
<dbReference type="GO" id="GO:0000422">
    <property type="term" value="P:autophagy of mitochondrion"/>
    <property type="evidence" value="ECO:0007669"/>
    <property type="project" value="TreeGrafter"/>
</dbReference>
<dbReference type="GO" id="GO:0061723">
    <property type="term" value="P:glycophagy"/>
    <property type="evidence" value="ECO:0007669"/>
    <property type="project" value="TreeGrafter"/>
</dbReference>
<dbReference type="GO" id="GO:0006869">
    <property type="term" value="P:lipid transport"/>
    <property type="evidence" value="ECO:0007669"/>
    <property type="project" value="UniProtKB-KW"/>
</dbReference>
<dbReference type="GO" id="GO:0034727">
    <property type="term" value="P:piecemeal microautophagy of the nucleus"/>
    <property type="evidence" value="ECO:0007669"/>
    <property type="project" value="TreeGrafter"/>
</dbReference>
<dbReference type="GO" id="GO:0015031">
    <property type="term" value="P:protein transport"/>
    <property type="evidence" value="ECO:0007669"/>
    <property type="project" value="UniProtKB-KW"/>
</dbReference>
<dbReference type="GO" id="GO:0061709">
    <property type="term" value="P:reticulophagy"/>
    <property type="evidence" value="ECO:0007669"/>
    <property type="project" value="TreeGrafter"/>
</dbReference>
<dbReference type="InterPro" id="IPR026849">
    <property type="entry name" value="ATG2"/>
</dbReference>
<dbReference type="PANTHER" id="PTHR13190">
    <property type="entry name" value="AUTOPHAGY-RELATED 2, ISOFORM A"/>
    <property type="match status" value="1"/>
</dbReference>
<dbReference type="PANTHER" id="PTHR13190:SF1">
    <property type="entry name" value="AUTOPHAGY-RELATED 2, ISOFORM A"/>
    <property type="match status" value="1"/>
</dbReference>
<dbReference type="Pfam" id="PF13329">
    <property type="entry name" value="ATG2_CAD"/>
    <property type="match status" value="2"/>
</dbReference>
<reference key="1">
    <citation type="journal article" date="2005" name="Nature">
        <title>Genome sequencing and analysis of Aspergillus oryzae.</title>
        <authorList>
            <person name="Machida M."/>
            <person name="Asai K."/>
            <person name="Sano M."/>
            <person name="Tanaka T."/>
            <person name="Kumagai T."/>
            <person name="Terai G."/>
            <person name="Kusumoto K."/>
            <person name="Arima T."/>
            <person name="Akita O."/>
            <person name="Kashiwagi Y."/>
            <person name="Abe K."/>
            <person name="Gomi K."/>
            <person name="Horiuchi H."/>
            <person name="Kitamoto K."/>
            <person name="Kobayashi T."/>
            <person name="Takeuchi M."/>
            <person name="Denning D.W."/>
            <person name="Galagan J.E."/>
            <person name="Nierman W.C."/>
            <person name="Yu J."/>
            <person name="Archer D.B."/>
            <person name="Bennett J.W."/>
            <person name="Bhatnagar D."/>
            <person name="Cleveland T.E."/>
            <person name="Fedorova N.D."/>
            <person name="Gotoh O."/>
            <person name="Horikawa H."/>
            <person name="Hosoyama A."/>
            <person name="Ichinomiya M."/>
            <person name="Igarashi R."/>
            <person name="Iwashita K."/>
            <person name="Juvvadi P.R."/>
            <person name="Kato M."/>
            <person name="Kato Y."/>
            <person name="Kin T."/>
            <person name="Kokubun A."/>
            <person name="Maeda H."/>
            <person name="Maeyama N."/>
            <person name="Maruyama J."/>
            <person name="Nagasaki H."/>
            <person name="Nakajima T."/>
            <person name="Oda K."/>
            <person name="Okada K."/>
            <person name="Paulsen I."/>
            <person name="Sakamoto K."/>
            <person name="Sawano T."/>
            <person name="Takahashi M."/>
            <person name="Takase K."/>
            <person name="Terabayashi Y."/>
            <person name="Wortman J.R."/>
            <person name="Yamada O."/>
            <person name="Yamagata Y."/>
            <person name="Anazawa H."/>
            <person name="Hata Y."/>
            <person name="Koide Y."/>
            <person name="Komori T."/>
            <person name="Koyama Y."/>
            <person name="Minetoki T."/>
            <person name="Suharnan S."/>
            <person name="Tanaka A."/>
            <person name="Isono K."/>
            <person name="Kuhara S."/>
            <person name="Ogasawara N."/>
            <person name="Kikuchi H."/>
        </authorList>
    </citation>
    <scope>NUCLEOTIDE SEQUENCE [LARGE SCALE GENOMIC DNA]</scope>
    <source>
        <strain>ATCC 42149 / RIB 40</strain>
    </source>
</reference>
<sequence>MAYFLPSFFQKRLLRYALSRLELVDTEALDLDSLGIRWGQRSTVELRDIGLRLETRRAETHDATTDQKTSGRVDPGSGDEPILPNPTDLAESFLQAEPKEEKEELQAAISSQSQVLQHTSTSSSDDEEELGLGNETVSLPSFVAAFLKGVVDRLQVQVDDISIRVDVETKQEGSSKRHPEEKPDLITGLLSVRQVSMGAVSTHSESGEASSSERRRLVSLSDINLALISEPVVFSNYSRFAAPASPSTPVQPKSSRPPSRAQSPSPETSSESSLALAMTRSTIFEPPQDLTRQELEEQHTPRLEGSVYTYDGRFSDADTEDGKRSYGSLEDSRQFEDDEKLLDNPAYLDSVIDYQFQDDDPERLDDMQTRVDGLFRRSRDTPRSQSPEHTAELTDQNSHPEGALIPLNDRHELEVARLPSHQHFLEAPEAITEPGSSGLTPEKDFRPGYKQQLPLVCAPSSEPDSSGSASESFKESELSESRLFSNEEAQSMYMSAISQGSTSHSFMPNIPGAWDSPESTYVRDTGFHETPTAMEQDAYSEQDETITTPKLTAQEGIYLSHASSIDNLQKTTTGTTGRESIQTSPGFNRLTDVAKRFVSVDKVLIWIPSVNHEKVPGDSQSASHQEMSSDGLKDSTAYLQDSVIDDDLLASRIHGFPGPRSGANDPSSPHEGVDHKASGYQEKTKHDAGFSSERDEATVEIHSAEVQFDIAIGWLVIKIGKRIVNAFGHGDGEPPKKHNSESKAPEQVQPKESFGLILNKFSIKFVEHVPGHANPFGESRQYSPTFFGLMHEDIVLQTTASGLKAHFSSTNDQTKLRLDITKFTLGVASEDLISFNQDLKMRESMRDVLSPMHGDISLSMSKSLESARIHVTTLPLHLNLNIQRLEEVVGWIGGLSTILELGSSISSASGAKTPKKDPPKRPRGVHFEAPPSPEKLPQDTSLPWKVNARIGGVALNIVGESHYLKLRTTAVKVVSRFEGVGVQIDKAKLSGPLPLDDSKDAPAKINLSNIRIEYLFAPKEVDLDRLLSLITPSKDKYDEDDDIMLDTLFRQRRQGSVLRTTIAGADIMISRITDFDSLPQLGDELSRLSNVAKYLPEDDRPGLLTLNLIRDFEARVNVGGKVGDITARLKNAEVAYISIPSLVAAQVGSATVLRNGTEELLGEALPLSAEQRSGQIPHPMLMARFIADEMEPTIKVKMHNLRAEYTVPAAIAFLGLNESSTTSDFAANMAQSIGNLAELQPSKESQSAIKPGSPKSPVRPTILALALRDCVIGLNPRGSEAKGLVVLTNANFSGAMDDGASSEATLDLRKASIMIIDDVRNMGSTDDSHRRNSTAPPTNQVQSFIDMGFVTVSSISSATASVKLLRSGEDGTQSLDVELRDDLLILETCADSTQTLISIVNGLQPPTPPSVTKKYRTEVLPLQDMLASFSGDAFALNSSSSLEGVSETAGDSAENIQDKEGHIEDEVEYVSDFYPAKPTSGGGSLHEAMTASGSNELLDSFHSQYYVSSSISDLEFRDDHFATQSAVGGTAHRWDSTENTYGLSDDTKLQKSPLRIRVRDAHVIWNLFDGYDWQRTRDTISKAVKDVERKATDRRARANRASPSFDEDEESVIGDCLFNSIYIGIPANKDPRELRSDINRNIDDLVSETGSYATTTTVTGATVRQSQSPSFRKKLRLSRSKYHKMTFELKGICADLVVFPPDSGETQSSLDVRVNDLEIFDHVPTSTWKKFATYMHEVGEKESGTSMVHLEILTVRPVPELAASEIVLKATLLPLRLHVDQDALDFLCRFFEFRDDSAPASSAPQDIPFLQRVEINAVPVKLDFKPKRVDYTGLRSGRTTEFMNFFVLDGADMVMRHVIIYGVSGFDKLGQTLNDIWMPDIKRNQLPGVLAGLAPIRSLVNVGGGVKDLVVVPMREYRKDGRIVRSIQKGALAFAKTTSNELVKLGAKLAIGTQTVLQGAEDLLTSPNTQLAGAEEELGDEEEAKKISLYADQPVGVVQGLRGAFRGLERDLLLTRDAIVAVPGEVVESGSAKAAAKAVWKRAPTVILRPAIGVSKAVGQTLLGAGNTLDPSNRRKMEDKYKRH</sequence>